<gene>
    <name evidence="1" type="primary">aroK</name>
    <name type="ordered locus">CPS_0472</name>
</gene>
<name>AROK_COLP3</name>
<reference key="1">
    <citation type="journal article" date="2005" name="Proc. Natl. Acad. Sci. U.S.A.">
        <title>The psychrophilic lifestyle as revealed by the genome sequence of Colwellia psychrerythraea 34H through genomic and proteomic analyses.</title>
        <authorList>
            <person name="Methe B.A."/>
            <person name="Nelson K.E."/>
            <person name="Deming J.W."/>
            <person name="Momen B."/>
            <person name="Melamud E."/>
            <person name="Zhang X."/>
            <person name="Moult J."/>
            <person name="Madupu R."/>
            <person name="Nelson W.C."/>
            <person name="Dodson R.J."/>
            <person name="Brinkac L.M."/>
            <person name="Daugherty S.C."/>
            <person name="Durkin A.S."/>
            <person name="DeBoy R.T."/>
            <person name="Kolonay J.F."/>
            <person name="Sullivan S.A."/>
            <person name="Zhou L."/>
            <person name="Davidsen T.M."/>
            <person name="Wu M."/>
            <person name="Huston A.L."/>
            <person name="Lewis M."/>
            <person name="Weaver B."/>
            <person name="Weidman J.F."/>
            <person name="Khouri H."/>
            <person name="Utterback T.R."/>
            <person name="Feldblyum T.V."/>
            <person name="Fraser C.M."/>
        </authorList>
    </citation>
    <scope>NUCLEOTIDE SEQUENCE [LARGE SCALE GENOMIC DNA]</scope>
    <source>
        <strain>34H / ATCC BAA-681</strain>
    </source>
</reference>
<sequence>MAEKRNIFLIGPMGAGKSTIGREIADRLHLEFFDSDQEIERRTGADIAWVFDLEGEEGFRKREETVIEDLSEKHGIVLATGGGSVISTNVRNHLSARGIVVYLETTIDKQVARTQRDRRRPLLQTSEEPRTVLENLAVERNPLYEDIADIIVQTDDQSAKVVAHKIIERLDF</sequence>
<accession>Q489N4</accession>
<comment type="function">
    <text evidence="1">Catalyzes the specific phosphorylation of the 3-hydroxyl group of shikimic acid using ATP as a cosubstrate.</text>
</comment>
<comment type="catalytic activity">
    <reaction evidence="1">
        <text>shikimate + ATP = 3-phosphoshikimate + ADP + H(+)</text>
        <dbReference type="Rhea" id="RHEA:13121"/>
        <dbReference type="ChEBI" id="CHEBI:15378"/>
        <dbReference type="ChEBI" id="CHEBI:30616"/>
        <dbReference type="ChEBI" id="CHEBI:36208"/>
        <dbReference type="ChEBI" id="CHEBI:145989"/>
        <dbReference type="ChEBI" id="CHEBI:456216"/>
        <dbReference type="EC" id="2.7.1.71"/>
    </reaction>
</comment>
<comment type="cofactor">
    <cofactor evidence="1">
        <name>Mg(2+)</name>
        <dbReference type="ChEBI" id="CHEBI:18420"/>
    </cofactor>
    <text evidence="1">Binds 1 Mg(2+) ion per subunit.</text>
</comment>
<comment type="pathway">
    <text evidence="1">Metabolic intermediate biosynthesis; chorismate biosynthesis; chorismate from D-erythrose 4-phosphate and phosphoenolpyruvate: step 5/7.</text>
</comment>
<comment type="subunit">
    <text evidence="1">Monomer.</text>
</comment>
<comment type="subcellular location">
    <subcellularLocation>
        <location evidence="1">Cytoplasm</location>
    </subcellularLocation>
</comment>
<comment type="similarity">
    <text evidence="1">Belongs to the shikimate kinase family.</text>
</comment>
<evidence type="ECO:0000255" key="1">
    <source>
        <dbReference type="HAMAP-Rule" id="MF_00109"/>
    </source>
</evidence>
<organism>
    <name type="scientific">Colwellia psychrerythraea (strain 34H / ATCC BAA-681)</name>
    <name type="common">Vibrio psychroerythus</name>
    <dbReference type="NCBI Taxonomy" id="167879"/>
    <lineage>
        <taxon>Bacteria</taxon>
        <taxon>Pseudomonadati</taxon>
        <taxon>Pseudomonadota</taxon>
        <taxon>Gammaproteobacteria</taxon>
        <taxon>Alteromonadales</taxon>
        <taxon>Colwelliaceae</taxon>
        <taxon>Colwellia</taxon>
    </lineage>
</organism>
<feature type="chain" id="PRO_0000237866" description="Shikimate kinase">
    <location>
        <begin position="1"/>
        <end position="172"/>
    </location>
</feature>
<feature type="binding site" evidence="1">
    <location>
        <begin position="14"/>
        <end position="19"/>
    </location>
    <ligand>
        <name>ATP</name>
        <dbReference type="ChEBI" id="CHEBI:30616"/>
    </ligand>
</feature>
<feature type="binding site" evidence="1">
    <location>
        <position position="18"/>
    </location>
    <ligand>
        <name>Mg(2+)</name>
        <dbReference type="ChEBI" id="CHEBI:18420"/>
    </ligand>
</feature>
<feature type="binding site" evidence="1">
    <location>
        <position position="36"/>
    </location>
    <ligand>
        <name>substrate</name>
    </ligand>
</feature>
<feature type="binding site" evidence="1">
    <location>
        <position position="60"/>
    </location>
    <ligand>
        <name>substrate</name>
    </ligand>
</feature>
<feature type="binding site" evidence="1">
    <location>
        <position position="82"/>
    </location>
    <ligand>
        <name>substrate</name>
    </ligand>
</feature>
<feature type="binding site" evidence="1">
    <location>
        <position position="120"/>
    </location>
    <ligand>
        <name>ATP</name>
        <dbReference type="ChEBI" id="CHEBI:30616"/>
    </ligand>
</feature>
<feature type="binding site" evidence="1">
    <location>
        <position position="140"/>
    </location>
    <ligand>
        <name>substrate</name>
    </ligand>
</feature>
<feature type="binding site" evidence="1">
    <location>
        <position position="157"/>
    </location>
    <ligand>
        <name>ATP</name>
        <dbReference type="ChEBI" id="CHEBI:30616"/>
    </ligand>
</feature>
<keyword id="KW-0028">Amino-acid biosynthesis</keyword>
<keyword id="KW-0057">Aromatic amino acid biosynthesis</keyword>
<keyword id="KW-0067">ATP-binding</keyword>
<keyword id="KW-0963">Cytoplasm</keyword>
<keyword id="KW-0418">Kinase</keyword>
<keyword id="KW-0460">Magnesium</keyword>
<keyword id="KW-0479">Metal-binding</keyword>
<keyword id="KW-0547">Nucleotide-binding</keyword>
<keyword id="KW-0808">Transferase</keyword>
<protein>
    <recommendedName>
        <fullName evidence="1">Shikimate kinase</fullName>
        <shortName evidence="1">SK</shortName>
        <ecNumber evidence="1">2.7.1.71</ecNumber>
    </recommendedName>
</protein>
<proteinExistence type="inferred from homology"/>
<dbReference type="EC" id="2.7.1.71" evidence="1"/>
<dbReference type="EMBL" id="CP000083">
    <property type="protein sequence ID" value="AAZ26032.1"/>
    <property type="molecule type" value="Genomic_DNA"/>
</dbReference>
<dbReference type="RefSeq" id="WP_011041333.1">
    <property type="nucleotide sequence ID" value="NC_003910.7"/>
</dbReference>
<dbReference type="SMR" id="Q489N4"/>
<dbReference type="STRING" id="167879.CPS_0472"/>
<dbReference type="KEGG" id="cps:CPS_0472"/>
<dbReference type="eggNOG" id="COG0703">
    <property type="taxonomic scope" value="Bacteria"/>
</dbReference>
<dbReference type="HOGENOM" id="CLU_057607_2_2_6"/>
<dbReference type="UniPathway" id="UPA00053">
    <property type="reaction ID" value="UER00088"/>
</dbReference>
<dbReference type="Proteomes" id="UP000000547">
    <property type="component" value="Chromosome"/>
</dbReference>
<dbReference type="GO" id="GO:0005829">
    <property type="term" value="C:cytosol"/>
    <property type="evidence" value="ECO:0007669"/>
    <property type="project" value="TreeGrafter"/>
</dbReference>
<dbReference type="GO" id="GO:0005524">
    <property type="term" value="F:ATP binding"/>
    <property type="evidence" value="ECO:0007669"/>
    <property type="project" value="UniProtKB-UniRule"/>
</dbReference>
<dbReference type="GO" id="GO:0000287">
    <property type="term" value="F:magnesium ion binding"/>
    <property type="evidence" value="ECO:0007669"/>
    <property type="project" value="UniProtKB-UniRule"/>
</dbReference>
<dbReference type="GO" id="GO:0004765">
    <property type="term" value="F:shikimate kinase activity"/>
    <property type="evidence" value="ECO:0007669"/>
    <property type="project" value="UniProtKB-UniRule"/>
</dbReference>
<dbReference type="GO" id="GO:0008652">
    <property type="term" value="P:amino acid biosynthetic process"/>
    <property type="evidence" value="ECO:0007669"/>
    <property type="project" value="UniProtKB-KW"/>
</dbReference>
<dbReference type="GO" id="GO:0009073">
    <property type="term" value="P:aromatic amino acid family biosynthetic process"/>
    <property type="evidence" value="ECO:0007669"/>
    <property type="project" value="UniProtKB-KW"/>
</dbReference>
<dbReference type="GO" id="GO:0009423">
    <property type="term" value="P:chorismate biosynthetic process"/>
    <property type="evidence" value="ECO:0007669"/>
    <property type="project" value="UniProtKB-UniRule"/>
</dbReference>
<dbReference type="CDD" id="cd00464">
    <property type="entry name" value="SK"/>
    <property type="match status" value="1"/>
</dbReference>
<dbReference type="FunFam" id="3.40.50.300:FF:000099">
    <property type="entry name" value="Shikimate kinase 1"/>
    <property type="match status" value="1"/>
</dbReference>
<dbReference type="Gene3D" id="3.40.50.300">
    <property type="entry name" value="P-loop containing nucleotide triphosphate hydrolases"/>
    <property type="match status" value="1"/>
</dbReference>
<dbReference type="HAMAP" id="MF_00109">
    <property type="entry name" value="Shikimate_kinase"/>
    <property type="match status" value="1"/>
</dbReference>
<dbReference type="InterPro" id="IPR027417">
    <property type="entry name" value="P-loop_NTPase"/>
</dbReference>
<dbReference type="InterPro" id="IPR031322">
    <property type="entry name" value="Shikimate/glucono_kinase"/>
</dbReference>
<dbReference type="InterPro" id="IPR000623">
    <property type="entry name" value="Shikimate_kinase/TSH1"/>
</dbReference>
<dbReference type="InterPro" id="IPR023000">
    <property type="entry name" value="Shikimate_kinase_CS"/>
</dbReference>
<dbReference type="NCBIfam" id="NF003456">
    <property type="entry name" value="PRK05057.1"/>
    <property type="match status" value="1"/>
</dbReference>
<dbReference type="PANTHER" id="PTHR21087">
    <property type="entry name" value="SHIKIMATE KINASE"/>
    <property type="match status" value="1"/>
</dbReference>
<dbReference type="PANTHER" id="PTHR21087:SF16">
    <property type="entry name" value="SHIKIMATE KINASE 1, CHLOROPLASTIC"/>
    <property type="match status" value="1"/>
</dbReference>
<dbReference type="Pfam" id="PF01202">
    <property type="entry name" value="SKI"/>
    <property type="match status" value="1"/>
</dbReference>
<dbReference type="PRINTS" id="PR01100">
    <property type="entry name" value="SHIKIMTKNASE"/>
</dbReference>
<dbReference type="SUPFAM" id="SSF52540">
    <property type="entry name" value="P-loop containing nucleoside triphosphate hydrolases"/>
    <property type="match status" value="1"/>
</dbReference>
<dbReference type="PROSITE" id="PS01128">
    <property type="entry name" value="SHIKIMATE_KINASE"/>
    <property type="match status" value="1"/>
</dbReference>